<reference key="1">
    <citation type="journal article" date="2006" name="Proc. Natl. Acad. Sci. U.S.A.">
        <title>Burkholderia xenovorans LB400 harbors a multi-replicon, 9.73-Mbp genome shaped for versatility.</title>
        <authorList>
            <person name="Chain P.S.G."/>
            <person name="Denef V.J."/>
            <person name="Konstantinidis K.T."/>
            <person name="Vergez L.M."/>
            <person name="Agullo L."/>
            <person name="Reyes V.L."/>
            <person name="Hauser L."/>
            <person name="Cordova M."/>
            <person name="Gomez L."/>
            <person name="Gonzalez M."/>
            <person name="Land M."/>
            <person name="Lao V."/>
            <person name="Larimer F."/>
            <person name="LiPuma J.J."/>
            <person name="Mahenthiralingam E."/>
            <person name="Malfatti S.A."/>
            <person name="Marx C.J."/>
            <person name="Parnell J.J."/>
            <person name="Ramette A."/>
            <person name="Richardson P."/>
            <person name="Seeger M."/>
            <person name="Smith D."/>
            <person name="Spilker T."/>
            <person name="Sul W.J."/>
            <person name="Tsoi T.V."/>
            <person name="Ulrich L.E."/>
            <person name="Zhulin I.B."/>
            <person name="Tiedje J.M."/>
        </authorList>
    </citation>
    <scope>NUCLEOTIDE SEQUENCE [LARGE SCALE GENOMIC DNA]</scope>
    <source>
        <strain>LB400</strain>
    </source>
</reference>
<name>MINC_PARXL</name>
<comment type="function">
    <text evidence="1">Cell division inhibitor that blocks the formation of polar Z ring septums. Rapidly oscillates between the poles of the cell to destabilize FtsZ filaments that have formed before they mature into polar Z rings. Prevents FtsZ polymerization.</text>
</comment>
<comment type="subunit">
    <text evidence="1">Interacts with MinD and FtsZ.</text>
</comment>
<comment type="similarity">
    <text evidence="1">Belongs to the MinC family.</text>
</comment>
<accession>Q143C9</accession>
<sequence length="282" mass="29937">MSPKKSPFFELRSGSVDTLLFVVKTTDLEAMRAELTRRFEATPEFFANDVVAIDVRRLAGNERVALADIAQLLDSVRMRPVGVVADAQQAWAAESALPLLEARDRRGAAARSADEESANAAAAAPAATAATATPPADLFESVAGTPESGTPATAAAVEPAPAAEPVRLATSSQTMVVDKPLRSGQRIYAKGDLVVLGLVSYGAEVIAEGNIHIYAPLRGRALAGVQGNHDARIFCTCLEPELISIAGIYRTTENPLPADVLGKPVQIWLEEEKLMIEPLRLT</sequence>
<feature type="chain" id="PRO_1000047821" description="Probable septum site-determining protein MinC">
    <location>
        <begin position="1"/>
        <end position="282"/>
    </location>
</feature>
<feature type="region of interest" description="Disordered" evidence="2">
    <location>
        <begin position="108"/>
        <end position="127"/>
    </location>
</feature>
<feature type="compositionally biased region" description="Low complexity" evidence="2">
    <location>
        <begin position="118"/>
        <end position="127"/>
    </location>
</feature>
<protein>
    <recommendedName>
        <fullName evidence="1">Probable septum site-determining protein MinC</fullName>
    </recommendedName>
</protein>
<organism>
    <name type="scientific">Paraburkholderia xenovorans (strain LB400)</name>
    <dbReference type="NCBI Taxonomy" id="266265"/>
    <lineage>
        <taxon>Bacteria</taxon>
        <taxon>Pseudomonadati</taxon>
        <taxon>Pseudomonadota</taxon>
        <taxon>Betaproteobacteria</taxon>
        <taxon>Burkholderiales</taxon>
        <taxon>Burkholderiaceae</taxon>
        <taxon>Paraburkholderia</taxon>
    </lineage>
</organism>
<keyword id="KW-0131">Cell cycle</keyword>
<keyword id="KW-0132">Cell division</keyword>
<keyword id="KW-1185">Reference proteome</keyword>
<keyword id="KW-0717">Septation</keyword>
<dbReference type="EMBL" id="CP000270">
    <property type="protein sequence ID" value="ABE29560.1"/>
    <property type="molecule type" value="Genomic_DNA"/>
</dbReference>
<dbReference type="RefSeq" id="WP_011487305.1">
    <property type="nucleotide sequence ID" value="NC_007951.1"/>
</dbReference>
<dbReference type="SMR" id="Q143C9"/>
<dbReference type="STRING" id="266265.Bxe_A3425"/>
<dbReference type="KEGG" id="bxb:DR64_1125"/>
<dbReference type="KEGG" id="bxe:Bxe_A3425"/>
<dbReference type="PATRIC" id="fig|266265.5.peg.1048"/>
<dbReference type="eggNOG" id="COG0850">
    <property type="taxonomic scope" value="Bacteria"/>
</dbReference>
<dbReference type="OrthoDB" id="9794530at2"/>
<dbReference type="Proteomes" id="UP000001817">
    <property type="component" value="Chromosome 1"/>
</dbReference>
<dbReference type="GO" id="GO:0000902">
    <property type="term" value="P:cell morphogenesis"/>
    <property type="evidence" value="ECO:0007669"/>
    <property type="project" value="InterPro"/>
</dbReference>
<dbReference type="GO" id="GO:0000917">
    <property type="term" value="P:division septum assembly"/>
    <property type="evidence" value="ECO:0007669"/>
    <property type="project" value="UniProtKB-KW"/>
</dbReference>
<dbReference type="GO" id="GO:0051302">
    <property type="term" value="P:regulation of cell division"/>
    <property type="evidence" value="ECO:0007669"/>
    <property type="project" value="InterPro"/>
</dbReference>
<dbReference type="GO" id="GO:1901891">
    <property type="term" value="P:regulation of cell septum assembly"/>
    <property type="evidence" value="ECO:0007669"/>
    <property type="project" value="InterPro"/>
</dbReference>
<dbReference type="Gene3D" id="2.160.20.70">
    <property type="match status" value="1"/>
</dbReference>
<dbReference type="Gene3D" id="3.30.70.260">
    <property type="match status" value="1"/>
</dbReference>
<dbReference type="HAMAP" id="MF_00267">
    <property type="entry name" value="MinC"/>
    <property type="match status" value="1"/>
</dbReference>
<dbReference type="InterPro" id="IPR016098">
    <property type="entry name" value="CAP/MinC_C"/>
</dbReference>
<dbReference type="InterPro" id="IPR013033">
    <property type="entry name" value="MinC"/>
</dbReference>
<dbReference type="InterPro" id="IPR036145">
    <property type="entry name" value="MinC_C_sf"/>
</dbReference>
<dbReference type="InterPro" id="IPR007874">
    <property type="entry name" value="MinC_N"/>
</dbReference>
<dbReference type="InterPro" id="IPR005526">
    <property type="entry name" value="Septum_form_inhib_MinC_C"/>
</dbReference>
<dbReference type="NCBIfam" id="TIGR01222">
    <property type="entry name" value="minC"/>
    <property type="match status" value="1"/>
</dbReference>
<dbReference type="PANTHER" id="PTHR34108">
    <property type="entry name" value="SEPTUM SITE-DETERMINING PROTEIN MINC"/>
    <property type="match status" value="1"/>
</dbReference>
<dbReference type="PANTHER" id="PTHR34108:SF1">
    <property type="entry name" value="SEPTUM SITE-DETERMINING PROTEIN MINC"/>
    <property type="match status" value="1"/>
</dbReference>
<dbReference type="Pfam" id="PF03775">
    <property type="entry name" value="MinC_C"/>
    <property type="match status" value="1"/>
</dbReference>
<dbReference type="Pfam" id="PF05209">
    <property type="entry name" value="MinC_N"/>
    <property type="match status" value="1"/>
</dbReference>
<dbReference type="SUPFAM" id="SSF63848">
    <property type="entry name" value="Cell-division inhibitor MinC, C-terminal domain"/>
    <property type="match status" value="1"/>
</dbReference>
<gene>
    <name evidence="1" type="primary">minC</name>
    <name type="ordered locus">Bxeno_A1022</name>
    <name type="ORF">Bxe_A3425</name>
</gene>
<evidence type="ECO:0000255" key="1">
    <source>
        <dbReference type="HAMAP-Rule" id="MF_00267"/>
    </source>
</evidence>
<evidence type="ECO:0000256" key="2">
    <source>
        <dbReference type="SAM" id="MobiDB-lite"/>
    </source>
</evidence>
<proteinExistence type="inferred from homology"/>